<comment type="function">
    <text evidence="1">The RecF protein is involved in DNA metabolism; it is required for DNA replication and normal SOS inducibility. RecF binds preferentially to single-stranded, linear DNA. It also seems to bind ATP.</text>
</comment>
<comment type="subcellular location">
    <subcellularLocation>
        <location evidence="1">Cytoplasm</location>
    </subcellularLocation>
</comment>
<comment type="similarity">
    <text evidence="1">Belongs to the RecF family.</text>
</comment>
<keyword id="KW-0067">ATP-binding</keyword>
<keyword id="KW-0963">Cytoplasm</keyword>
<keyword id="KW-0227">DNA damage</keyword>
<keyword id="KW-0234">DNA repair</keyword>
<keyword id="KW-0235">DNA replication</keyword>
<keyword id="KW-0238">DNA-binding</keyword>
<keyword id="KW-0547">Nucleotide-binding</keyword>
<keyword id="KW-1185">Reference proteome</keyword>
<keyword id="KW-0742">SOS response</keyword>
<protein>
    <recommendedName>
        <fullName evidence="1">DNA replication and repair protein RecF</fullName>
    </recommendedName>
</protein>
<gene>
    <name evidence="1" type="primary">recF</name>
    <name type="ordered locus">Dred_0004</name>
</gene>
<name>RECF_DESRM</name>
<accession>A4J0F3</accession>
<sequence>MRVKKLSLRNFRNYKEAQFIPHPSINIITGPNAQGKTNLLEAIYYSLRGCSFRAEKDRDVTNWESNHTVINTEVNLSSRLIKLQWKIQEGSKKLSLNGVERPRSELDLFGVVLFCPEDLSLIKGSPQERRHFLDYEVGTLSPGYSQLWRQYAKILSQRNSLLKEIRDHRSKQEVLEVWDEQLYRYGAKVIYLRLQVLKKLIPIARKTHFGLTGGTEELQAKYLSSLVLEPGLSEGQIYQVFSSSSKKIRQMELKRCQTLLGPHRDDLSLAINGVEAKTFGSQGQQRTVTLSLKLSQLDLWYHEFGEYPVLLLDDVLFELDRSRQNMLIDKILNKVQTFITTSFTGGIEETIKGAGLLWQVNAGSLTQKEEF</sequence>
<feature type="chain" id="PRO_1000072098" description="DNA replication and repair protein RecF">
    <location>
        <begin position="1"/>
        <end position="371"/>
    </location>
</feature>
<feature type="binding site" evidence="1">
    <location>
        <begin position="30"/>
        <end position="37"/>
    </location>
    <ligand>
        <name>ATP</name>
        <dbReference type="ChEBI" id="CHEBI:30616"/>
    </ligand>
</feature>
<organism>
    <name type="scientific">Desulforamulus reducens (strain ATCC BAA-1160 / DSM 100696 / MI-1)</name>
    <name type="common">Desulfotomaculum reducens</name>
    <dbReference type="NCBI Taxonomy" id="349161"/>
    <lineage>
        <taxon>Bacteria</taxon>
        <taxon>Bacillati</taxon>
        <taxon>Bacillota</taxon>
        <taxon>Clostridia</taxon>
        <taxon>Eubacteriales</taxon>
        <taxon>Peptococcaceae</taxon>
        <taxon>Desulforamulus</taxon>
    </lineage>
</organism>
<reference key="1">
    <citation type="submission" date="2007-03" db="EMBL/GenBank/DDBJ databases">
        <title>Complete sequence of Desulfotomaculum reducens MI-1.</title>
        <authorList>
            <consortium name="US DOE Joint Genome Institute"/>
            <person name="Copeland A."/>
            <person name="Lucas S."/>
            <person name="Lapidus A."/>
            <person name="Barry K."/>
            <person name="Detter J.C."/>
            <person name="Glavina del Rio T."/>
            <person name="Hammon N."/>
            <person name="Israni S."/>
            <person name="Dalin E."/>
            <person name="Tice H."/>
            <person name="Pitluck S."/>
            <person name="Sims D."/>
            <person name="Brettin T."/>
            <person name="Bruce D."/>
            <person name="Han C."/>
            <person name="Tapia R."/>
            <person name="Schmutz J."/>
            <person name="Larimer F."/>
            <person name="Land M."/>
            <person name="Hauser L."/>
            <person name="Kyrpides N."/>
            <person name="Kim E."/>
            <person name="Tebo B.M."/>
            <person name="Richardson P."/>
        </authorList>
    </citation>
    <scope>NUCLEOTIDE SEQUENCE [LARGE SCALE GENOMIC DNA]</scope>
    <source>
        <strain>ATCC BAA-1160 / DSM 100696 / MI-1</strain>
    </source>
</reference>
<evidence type="ECO:0000255" key="1">
    <source>
        <dbReference type="HAMAP-Rule" id="MF_00365"/>
    </source>
</evidence>
<dbReference type="EMBL" id="CP000612">
    <property type="protein sequence ID" value="ABO48556.1"/>
    <property type="molecule type" value="Genomic_DNA"/>
</dbReference>
<dbReference type="RefSeq" id="WP_011876400.1">
    <property type="nucleotide sequence ID" value="NC_009253.1"/>
</dbReference>
<dbReference type="SMR" id="A4J0F3"/>
<dbReference type="STRING" id="349161.Dred_0004"/>
<dbReference type="KEGG" id="drm:Dred_0004"/>
<dbReference type="eggNOG" id="COG1195">
    <property type="taxonomic scope" value="Bacteria"/>
</dbReference>
<dbReference type="HOGENOM" id="CLU_040267_0_1_9"/>
<dbReference type="OrthoDB" id="9803889at2"/>
<dbReference type="Proteomes" id="UP000001556">
    <property type="component" value="Chromosome"/>
</dbReference>
<dbReference type="GO" id="GO:0005737">
    <property type="term" value="C:cytoplasm"/>
    <property type="evidence" value="ECO:0007669"/>
    <property type="project" value="UniProtKB-SubCell"/>
</dbReference>
<dbReference type="GO" id="GO:0005524">
    <property type="term" value="F:ATP binding"/>
    <property type="evidence" value="ECO:0007669"/>
    <property type="project" value="UniProtKB-UniRule"/>
</dbReference>
<dbReference type="GO" id="GO:0003697">
    <property type="term" value="F:single-stranded DNA binding"/>
    <property type="evidence" value="ECO:0007669"/>
    <property type="project" value="UniProtKB-UniRule"/>
</dbReference>
<dbReference type="GO" id="GO:0006260">
    <property type="term" value="P:DNA replication"/>
    <property type="evidence" value="ECO:0007669"/>
    <property type="project" value="UniProtKB-UniRule"/>
</dbReference>
<dbReference type="GO" id="GO:0000731">
    <property type="term" value="P:DNA synthesis involved in DNA repair"/>
    <property type="evidence" value="ECO:0007669"/>
    <property type="project" value="TreeGrafter"/>
</dbReference>
<dbReference type="GO" id="GO:0006302">
    <property type="term" value="P:double-strand break repair"/>
    <property type="evidence" value="ECO:0007669"/>
    <property type="project" value="TreeGrafter"/>
</dbReference>
<dbReference type="GO" id="GO:0009432">
    <property type="term" value="P:SOS response"/>
    <property type="evidence" value="ECO:0007669"/>
    <property type="project" value="UniProtKB-UniRule"/>
</dbReference>
<dbReference type="Gene3D" id="3.40.50.300">
    <property type="entry name" value="P-loop containing nucleotide triphosphate hydrolases"/>
    <property type="match status" value="1"/>
</dbReference>
<dbReference type="Gene3D" id="1.20.1050.90">
    <property type="entry name" value="RecF/RecN/SMC, N-terminal domain"/>
    <property type="match status" value="1"/>
</dbReference>
<dbReference type="HAMAP" id="MF_00365">
    <property type="entry name" value="RecF"/>
    <property type="match status" value="1"/>
</dbReference>
<dbReference type="InterPro" id="IPR001238">
    <property type="entry name" value="DNA-binding_RecF"/>
</dbReference>
<dbReference type="InterPro" id="IPR018078">
    <property type="entry name" value="DNA-binding_RecF_CS"/>
</dbReference>
<dbReference type="InterPro" id="IPR027417">
    <property type="entry name" value="P-loop_NTPase"/>
</dbReference>
<dbReference type="InterPro" id="IPR003395">
    <property type="entry name" value="RecF/RecN/SMC_N"/>
</dbReference>
<dbReference type="InterPro" id="IPR042174">
    <property type="entry name" value="RecF_2"/>
</dbReference>
<dbReference type="NCBIfam" id="TIGR00611">
    <property type="entry name" value="recf"/>
    <property type="match status" value="1"/>
</dbReference>
<dbReference type="PANTHER" id="PTHR32182">
    <property type="entry name" value="DNA REPLICATION AND REPAIR PROTEIN RECF"/>
    <property type="match status" value="1"/>
</dbReference>
<dbReference type="PANTHER" id="PTHR32182:SF0">
    <property type="entry name" value="DNA REPLICATION AND REPAIR PROTEIN RECF"/>
    <property type="match status" value="1"/>
</dbReference>
<dbReference type="Pfam" id="PF02463">
    <property type="entry name" value="SMC_N"/>
    <property type="match status" value="1"/>
</dbReference>
<dbReference type="SUPFAM" id="SSF52540">
    <property type="entry name" value="P-loop containing nucleoside triphosphate hydrolases"/>
    <property type="match status" value="1"/>
</dbReference>
<dbReference type="PROSITE" id="PS00617">
    <property type="entry name" value="RECF_1"/>
    <property type="match status" value="1"/>
</dbReference>
<dbReference type="PROSITE" id="PS00618">
    <property type="entry name" value="RECF_2"/>
    <property type="match status" value="1"/>
</dbReference>
<proteinExistence type="inferred from homology"/>